<dbReference type="EC" id="1.8.4.12" evidence="2"/>
<dbReference type="EMBL" id="CP000800">
    <property type="protein sequence ID" value="ABV18018.1"/>
    <property type="molecule type" value="Genomic_DNA"/>
</dbReference>
<dbReference type="RefSeq" id="WP_001284618.1">
    <property type="nucleotide sequence ID" value="NC_009801.1"/>
</dbReference>
<dbReference type="SMR" id="A7ZMP8"/>
<dbReference type="GeneID" id="93775987"/>
<dbReference type="KEGG" id="ecw:EcE24377A_2002"/>
<dbReference type="HOGENOM" id="CLU_031040_8_5_6"/>
<dbReference type="Proteomes" id="UP000001122">
    <property type="component" value="Chromosome"/>
</dbReference>
<dbReference type="GO" id="GO:0005737">
    <property type="term" value="C:cytoplasm"/>
    <property type="evidence" value="ECO:0007669"/>
    <property type="project" value="TreeGrafter"/>
</dbReference>
<dbReference type="GO" id="GO:0033743">
    <property type="term" value="F:peptide-methionine (R)-S-oxide reductase activity"/>
    <property type="evidence" value="ECO:0007669"/>
    <property type="project" value="UniProtKB-UniRule"/>
</dbReference>
<dbReference type="GO" id="GO:0008270">
    <property type="term" value="F:zinc ion binding"/>
    <property type="evidence" value="ECO:0007669"/>
    <property type="project" value="UniProtKB-UniRule"/>
</dbReference>
<dbReference type="GO" id="GO:0030091">
    <property type="term" value="P:protein repair"/>
    <property type="evidence" value="ECO:0007669"/>
    <property type="project" value="InterPro"/>
</dbReference>
<dbReference type="GO" id="GO:0006979">
    <property type="term" value="P:response to oxidative stress"/>
    <property type="evidence" value="ECO:0007669"/>
    <property type="project" value="InterPro"/>
</dbReference>
<dbReference type="FunFam" id="2.170.150.20:FF:000001">
    <property type="entry name" value="Peptide methionine sulfoxide reductase MsrB"/>
    <property type="match status" value="1"/>
</dbReference>
<dbReference type="Gene3D" id="2.170.150.20">
    <property type="entry name" value="Peptide methionine sulfoxide reductase"/>
    <property type="match status" value="1"/>
</dbReference>
<dbReference type="HAMAP" id="MF_01400">
    <property type="entry name" value="MsrB"/>
    <property type="match status" value="1"/>
</dbReference>
<dbReference type="InterPro" id="IPR028427">
    <property type="entry name" value="Met_Sox_Rdtase_MsrB"/>
</dbReference>
<dbReference type="InterPro" id="IPR002579">
    <property type="entry name" value="Met_Sox_Rdtase_MsrB_dom"/>
</dbReference>
<dbReference type="InterPro" id="IPR011057">
    <property type="entry name" value="Mss4-like_sf"/>
</dbReference>
<dbReference type="NCBIfam" id="TIGR00357">
    <property type="entry name" value="peptide-methionine (R)-S-oxide reductase MsrB"/>
    <property type="match status" value="1"/>
</dbReference>
<dbReference type="PANTHER" id="PTHR10173">
    <property type="entry name" value="METHIONINE SULFOXIDE REDUCTASE"/>
    <property type="match status" value="1"/>
</dbReference>
<dbReference type="PANTHER" id="PTHR10173:SF52">
    <property type="entry name" value="METHIONINE-R-SULFOXIDE REDUCTASE B1"/>
    <property type="match status" value="1"/>
</dbReference>
<dbReference type="Pfam" id="PF01641">
    <property type="entry name" value="SelR"/>
    <property type="match status" value="1"/>
</dbReference>
<dbReference type="SUPFAM" id="SSF51316">
    <property type="entry name" value="Mss4-like"/>
    <property type="match status" value="1"/>
</dbReference>
<dbReference type="PROSITE" id="PS51790">
    <property type="entry name" value="MSRB"/>
    <property type="match status" value="1"/>
</dbReference>
<organism>
    <name type="scientific">Escherichia coli O139:H28 (strain E24377A / ETEC)</name>
    <dbReference type="NCBI Taxonomy" id="331111"/>
    <lineage>
        <taxon>Bacteria</taxon>
        <taxon>Pseudomonadati</taxon>
        <taxon>Pseudomonadota</taxon>
        <taxon>Gammaproteobacteria</taxon>
        <taxon>Enterobacterales</taxon>
        <taxon>Enterobacteriaceae</taxon>
        <taxon>Escherichia</taxon>
    </lineage>
</organism>
<protein>
    <recommendedName>
        <fullName evidence="2">Peptide methionine sulfoxide reductase MsrB</fullName>
        <ecNumber evidence="2">1.8.4.12</ecNumber>
    </recommendedName>
    <alternativeName>
        <fullName evidence="2">Peptide-methionine (R)-S-oxide reductase</fullName>
    </alternativeName>
</protein>
<evidence type="ECO:0000250" key="1"/>
<evidence type="ECO:0000255" key="2">
    <source>
        <dbReference type="HAMAP-Rule" id="MF_01400"/>
    </source>
</evidence>
<evidence type="ECO:0000255" key="3">
    <source>
        <dbReference type="PROSITE-ProRule" id="PRU01126"/>
    </source>
</evidence>
<name>MSRB_ECO24</name>
<keyword id="KW-0479">Metal-binding</keyword>
<keyword id="KW-0560">Oxidoreductase</keyword>
<keyword id="KW-1185">Reference proteome</keyword>
<keyword id="KW-0862">Zinc</keyword>
<gene>
    <name evidence="2" type="primary">msrB</name>
    <name type="ordered locus">EcE24377A_2002</name>
</gene>
<reference key="1">
    <citation type="journal article" date="2008" name="J. Bacteriol.">
        <title>The pangenome structure of Escherichia coli: comparative genomic analysis of E. coli commensal and pathogenic isolates.</title>
        <authorList>
            <person name="Rasko D.A."/>
            <person name="Rosovitz M.J."/>
            <person name="Myers G.S.A."/>
            <person name="Mongodin E.F."/>
            <person name="Fricke W.F."/>
            <person name="Gajer P."/>
            <person name="Crabtree J."/>
            <person name="Sebaihia M."/>
            <person name="Thomson N.R."/>
            <person name="Chaudhuri R."/>
            <person name="Henderson I.R."/>
            <person name="Sperandio V."/>
            <person name="Ravel J."/>
        </authorList>
    </citation>
    <scope>NUCLEOTIDE SEQUENCE [LARGE SCALE GENOMIC DNA]</scope>
    <source>
        <strain>E24377A / ETEC</strain>
    </source>
</reference>
<proteinExistence type="inferred from homology"/>
<comment type="catalytic activity">
    <reaction evidence="2">
        <text>L-methionyl-[protein] + [thioredoxin]-disulfide + H2O = L-methionyl-(R)-S-oxide-[protein] + [thioredoxin]-dithiol</text>
        <dbReference type="Rhea" id="RHEA:24164"/>
        <dbReference type="Rhea" id="RHEA-COMP:10698"/>
        <dbReference type="Rhea" id="RHEA-COMP:10700"/>
        <dbReference type="Rhea" id="RHEA-COMP:12313"/>
        <dbReference type="Rhea" id="RHEA-COMP:12314"/>
        <dbReference type="ChEBI" id="CHEBI:15377"/>
        <dbReference type="ChEBI" id="CHEBI:16044"/>
        <dbReference type="ChEBI" id="CHEBI:29950"/>
        <dbReference type="ChEBI" id="CHEBI:45764"/>
        <dbReference type="ChEBI" id="CHEBI:50058"/>
        <dbReference type="EC" id="1.8.4.12"/>
    </reaction>
</comment>
<comment type="cofactor">
    <cofactor evidence="2">
        <name>Zn(2+)</name>
        <dbReference type="ChEBI" id="CHEBI:29105"/>
    </cofactor>
    <text evidence="2">Binds 1 zinc ion per subunit. The zinc ion is important for the structural integrity of the protein.</text>
</comment>
<comment type="similarity">
    <text evidence="2">Belongs to the MsrB Met sulfoxide reductase family.</text>
</comment>
<sequence>MANKPSAEELKKNLSEMQFYVTQNHGTEPPFTGRLLHNKRDGVYHCLICDAPLFHSQTKYDSGCGWPSFYEPVSEESIRYIKDLSHGMQRIEIRCGNCDAHLGHVFPDGPQPTGERYCVNSASLRFTDGENGEEING</sequence>
<accession>A7ZMP8</accession>
<feature type="initiator methionine" description="Removed" evidence="1">
    <location>
        <position position="1"/>
    </location>
</feature>
<feature type="chain" id="PRO_1000068269" description="Peptide methionine sulfoxide reductase MsrB">
    <location>
        <begin position="2"/>
        <end position="137"/>
    </location>
</feature>
<feature type="domain" description="MsrB" evidence="3">
    <location>
        <begin position="7"/>
        <end position="129"/>
    </location>
</feature>
<feature type="active site" description="Nucleophile" evidence="3">
    <location>
        <position position="118"/>
    </location>
</feature>
<feature type="binding site" evidence="3">
    <location>
        <position position="46"/>
    </location>
    <ligand>
        <name>Zn(2+)</name>
        <dbReference type="ChEBI" id="CHEBI:29105"/>
    </ligand>
</feature>
<feature type="binding site" evidence="3">
    <location>
        <position position="49"/>
    </location>
    <ligand>
        <name>Zn(2+)</name>
        <dbReference type="ChEBI" id="CHEBI:29105"/>
    </ligand>
</feature>
<feature type="binding site" evidence="3">
    <location>
        <position position="95"/>
    </location>
    <ligand>
        <name>Zn(2+)</name>
        <dbReference type="ChEBI" id="CHEBI:29105"/>
    </ligand>
</feature>
<feature type="binding site" evidence="3">
    <location>
        <position position="98"/>
    </location>
    <ligand>
        <name>Zn(2+)</name>
        <dbReference type="ChEBI" id="CHEBI:29105"/>
    </ligand>
</feature>